<organism>
    <name type="scientific">Oryza sativa subsp. japonica</name>
    <name type="common">Rice</name>
    <dbReference type="NCBI Taxonomy" id="39947"/>
    <lineage>
        <taxon>Eukaryota</taxon>
        <taxon>Viridiplantae</taxon>
        <taxon>Streptophyta</taxon>
        <taxon>Embryophyta</taxon>
        <taxon>Tracheophyta</taxon>
        <taxon>Spermatophyta</taxon>
        <taxon>Magnoliopsida</taxon>
        <taxon>Liliopsida</taxon>
        <taxon>Poales</taxon>
        <taxon>Poaceae</taxon>
        <taxon>BOP clade</taxon>
        <taxon>Oryzoideae</taxon>
        <taxon>Oryzeae</taxon>
        <taxon>Oryzinae</taxon>
        <taxon>Oryza</taxon>
        <taxon>Oryza sativa</taxon>
    </lineage>
</organism>
<name>TDC1_ORYSJ</name>
<gene>
    <name evidence="5" type="primary">TDC1</name>
    <name evidence="8" type="ordered locus">Os08g0140300</name>
    <name evidence="6" type="ordered locus">LOC_Os08g04540</name>
    <name evidence="7" type="ORF">OJ1368_G08.14</name>
    <name evidence="9" type="ORF">OsJ_25993</name>
</gene>
<dbReference type="EC" id="4.1.1.28" evidence="2 4"/>
<dbReference type="EMBL" id="AP003911">
    <property type="protein sequence ID" value="BAD11581.1"/>
    <property type="molecule type" value="Genomic_DNA"/>
</dbReference>
<dbReference type="EMBL" id="AP008214">
    <property type="protein sequence ID" value="BAF22882.1"/>
    <property type="molecule type" value="Genomic_DNA"/>
</dbReference>
<dbReference type="EMBL" id="AP014964">
    <property type="protein sequence ID" value="BAT03777.1"/>
    <property type="molecule type" value="Genomic_DNA"/>
</dbReference>
<dbReference type="EMBL" id="CM000145">
    <property type="protein sequence ID" value="EAZ41470.1"/>
    <property type="molecule type" value="Genomic_DNA"/>
</dbReference>
<dbReference type="EMBL" id="AK069031">
    <property type="protein sequence ID" value="BAG91223.1"/>
    <property type="molecule type" value="mRNA"/>
</dbReference>
<dbReference type="PDB" id="6KHN">
    <property type="method" value="X-ray"/>
    <property type="resolution" value="2.29 A"/>
    <property type="chains" value="A/B=1-514"/>
</dbReference>
<dbReference type="PDB" id="6KHO">
    <property type="method" value="X-ray"/>
    <property type="resolution" value="1.97 A"/>
    <property type="chains" value="A/B=1-514"/>
</dbReference>
<dbReference type="PDB" id="6KHP">
    <property type="method" value="X-ray"/>
    <property type="resolution" value="2.30 A"/>
    <property type="chains" value="A/B=1-514"/>
</dbReference>
<dbReference type="PDBsum" id="6KHN"/>
<dbReference type="PDBsum" id="6KHO"/>
<dbReference type="PDBsum" id="6KHP"/>
<dbReference type="SMR" id="Q6ZJK7"/>
<dbReference type="FunCoup" id="Q6ZJK7">
    <property type="interactions" value="309"/>
</dbReference>
<dbReference type="STRING" id="39947.Q6ZJK7"/>
<dbReference type="PaxDb" id="39947-Q6ZJK7"/>
<dbReference type="EnsemblPlants" id="Os08t0140300-01">
    <property type="protein sequence ID" value="Os08t0140300-01"/>
    <property type="gene ID" value="Os08g0140300"/>
</dbReference>
<dbReference type="GeneID" id="4344636"/>
<dbReference type="Gramene" id="Os08t0140300-01">
    <property type="protein sequence ID" value="Os08t0140300-01"/>
    <property type="gene ID" value="Os08g0140300"/>
</dbReference>
<dbReference type="KEGG" id="dosa:Os08g0140300"/>
<dbReference type="KEGG" id="osa:4344636"/>
<dbReference type="eggNOG" id="KOG0628">
    <property type="taxonomic scope" value="Eukaryota"/>
</dbReference>
<dbReference type="HOGENOM" id="CLU_011856_3_1_1"/>
<dbReference type="InParanoid" id="Q6ZJK7"/>
<dbReference type="OMA" id="WEVIRHE"/>
<dbReference type="OrthoDB" id="658100at2759"/>
<dbReference type="PlantReactome" id="R-OSA-1119344">
    <property type="pathway name" value="Hydroxycinnamic acid serotonin amides biosynthesis"/>
</dbReference>
<dbReference type="PlantReactome" id="R-OSA-1119438">
    <property type="pathway name" value="Secologanin and strictosidine biosynthesis"/>
</dbReference>
<dbReference type="PlantReactome" id="R-OSA-1119486">
    <property type="pathway name" value="IAA biosynthesis I"/>
</dbReference>
<dbReference type="Proteomes" id="UP000000763">
    <property type="component" value="Chromosome 8"/>
</dbReference>
<dbReference type="Proteomes" id="UP000007752">
    <property type="component" value="Chromosome 8"/>
</dbReference>
<dbReference type="Proteomes" id="UP000059680">
    <property type="component" value="Chromosome 8"/>
</dbReference>
<dbReference type="GO" id="GO:0005737">
    <property type="term" value="C:cytoplasm"/>
    <property type="evidence" value="ECO:0000318"/>
    <property type="project" value="GO_Central"/>
</dbReference>
<dbReference type="GO" id="GO:0036467">
    <property type="term" value="F:5-hydroxy-L-tryptophan decarboxylase activity"/>
    <property type="evidence" value="ECO:0007669"/>
    <property type="project" value="RHEA"/>
</dbReference>
<dbReference type="GO" id="GO:0016831">
    <property type="term" value="F:carboxy-lyase activity"/>
    <property type="evidence" value="ECO:0000318"/>
    <property type="project" value="GO_Central"/>
</dbReference>
<dbReference type="GO" id="GO:0036469">
    <property type="term" value="F:L-tryptophan decarboxylase activity"/>
    <property type="evidence" value="ECO:0000314"/>
    <property type="project" value="UniProtKB"/>
</dbReference>
<dbReference type="GO" id="GO:0030170">
    <property type="term" value="F:pyridoxal phosphate binding"/>
    <property type="evidence" value="ECO:0000314"/>
    <property type="project" value="UniProtKB"/>
</dbReference>
<dbReference type="GO" id="GO:0006587">
    <property type="term" value="P:serotonin biosynthetic process from tryptophan"/>
    <property type="evidence" value="ECO:0000314"/>
    <property type="project" value="UniProtKB"/>
</dbReference>
<dbReference type="FunFam" id="3.40.640.10:FF:000025">
    <property type="entry name" value="Histidine decarboxylase"/>
    <property type="match status" value="1"/>
</dbReference>
<dbReference type="FunFam" id="3.90.1150.10:FF:000018">
    <property type="entry name" value="Histidine decarboxylase"/>
    <property type="match status" value="1"/>
</dbReference>
<dbReference type="Gene3D" id="3.90.1150.10">
    <property type="entry name" value="Aspartate Aminotransferase, domain 1"/>
    <property type="match status" value="1"/>
</dbReference>
<dbReference type="Gene3D" id="1.20.1340.10">
    <property type="entry name" value="dopa decarboxylase, N-terminal domain"/>
    <property type="match status" value="1"/>
</dbReference>
<dbReference type="Gene3D" id="3.40.640.10">
    <property type="entry name" value="Type I PLP-dependent aspartate aminotransferase-like (Major domain)"/>
    <property type="match status" value="1"/>
</dbReference>
<dbReference type="InterPro" id="IPR010977">
    <property type="entry name" value="Aromatic_deC"/>
</dbReference>
<dbReference type="InterPro" id="IPR002129">
    <property type="entry name" value="PyrdxlP-dep_de-COase"/>
</dbReference>
<dbReference type="InterPro" id="IPR015424">
    <property type="entry name" value="PyrdxlP-dep_Trfase"/>
</dbReference>
<dbReference type="InterPro" id="IPR015421">
    <property type="entry name" value="PyrdxlP-dep_Trfase_major"/>
</dbReference>
<dbReference type="InterPro" id="IPR015422">
    <property type="entry name" value="PyrdxlP-dep_Trfase_small"/>
</dbReference>
<dbReference type="InterPro" id="IPR021115">
    <property type="entry name" value="Pyridoxal-P_BS"/>
</dbReference>
<dbReference type="PANTHER" id="PTHR11999">
    <property type="entry name" value="GROUP II PYRIDOXAL-5-PHOSPHATE DECARBOXYLASE"/>
    <property type="match status" value="1"/>
</dbReference>
<dbReference type="PANTHER" id="PTHR11999:SF157">
    <property type="entry name" value="TRYPTOPHAN DECARBOXYLASE 1"/>
    <property type="match status" value="1"/>
</dbReference>
<dbReference type="Pfam" id="PF00282">
    <property type="entry name" value="Pyridoxal_deC"/>
    <property type="match status" value="1"/>
</dbReference>
<dbReference type="PRINTS" id="PR00800">
    <property type="entry name" value="YHDCRBOXLASE"/>
</dbReference>
<dbReference type="SUPFAM" id="SSF53383">
    <property type="entry name" value="PLP-dependent transferases"/>
    <property type="match status" value="1"/>
</dbReference>
<dbReference type="PROSITE" id="PS00392">
    <property type="entry name" value="DDC_GAD_HDC_YDC"/>
    <property type="match status" value="1"/>
</dbReference>
<comment type="function">
    <text evidence="2 3 4">Involved in serotonin biosynthesis (PubMed:17763868, PubMed:19439571, PubMed:32595985). Catalyzes the decarboxylation of L-tryptophan to produce tryptamine, which is converted to serotonin by tryptamine 5-hydroxylase (PubMed:17763868, PubMed:32595985). May play a major role in serotonin biosynthesis during senescence (PubMed:19439571). Accumulation of serotonin attenuates leaf senescence (PubMed:19439571). Catalyzes the decarboxylation of 5-hydroxy-L-tryptophan to produce serotonin (PubMed:32595985).</text>
</comment>
<comment type="catalytic activity">
    <reaction evidence="2 4">
        <text>L-tryptophan + H(+) = tryptamine + CO2</text>
        <dbReference type="Rhea" id="RHEA:30339"/>
        <dbReference type="ChEBI" id="CHEBI:15378"/>
        <dbReference type="ChEBI" id="CHEBI:16526"/>
        <dbReference type="ChEBI" id="CHEBI:57887"/>
        <dbReference type="ChEBI" id="CHEBI:57912"/>
        <dbReference type="EC" id="4.1.1.28"/>
    </reaction>
    <physiologicalReaction direction="left-to-right" evidence="2 4">
        <dbReference type="Rhea" id="RHEA:30340"/>
    </physiologicalReaction>
</comment>
<comment type="catalytic activity">
    <reaction evidence="4">
        <text>5-hydroxy-L-tryptophan + H(+) = serotonin + CO2</text>
        <dbReference type="Rhea" id="RHEA:18533"/>
        <dbReference type="ChEBI" id="CHEBI:15378"/>
        <dbReference type="ChEBI" id="CHEBI:16526"/>
        <dbReference type="ChEBI" id="CHEBI:58266"/>
        <dbReference type="ChEBI" id="CHEBI:350546"/>
        <dbReference type="EC" id="4.1.1.28"/>
    </reaction>
    <physiologicalReaction direction="left-to-right" evidence="4">
        <dbReference type="Rhea" id="RHEA:18534"/>
    </physiologicalReaction>
</comment>
<comment type="cofactor">
    <cofactor evidence="2 4">
        <name>pyridoxal 5'-phosphate</name>
        <dbReference type="ChEBI" id="CHEBI:597326"/>
    </cofactor>
</comment>
<comment type="biophysicochemical properties">
    <kinetics>
        <KM evidence="2">0.69 mM for tryptophan</KM>
    </kinetics>
</comment>
<comment type="subunit">
    <text evidence="4">Forms homodimers.</text>
</comment>
<comment type="induction">
    <text evidence="3">Induced by senescence and abscisic acid (ABA).</text>
</comment>
<comment type="similarity">
    <text evidence="6">Belongs to the group II decarboxylase family.</text>
</comment>
<accession>Q6ZJK7</accession>
<sequence>MGSLDTNPTAFSAFPAGEGETFQPLNADDVRSYLHKAVDFISDYYKSVESMPVLPNVKPGYLQDELRASPPTYSAPFDVTMKELRSSVVPGMTHWASPNFFAFFPSTNSAAAIAGDLIASAMNTVGFTWQASPAATEMEVLALDWLAQMLNLPTSFMNRTGEGRGTGGGVILGTTSEAMLVTLVAARDAALRRSGSDGVAGLHRLAVYAADQTHSTFFKACRLAGFDPANIRSIPTGAETDYGLDPARLLEAMQADADAGLVPTYVCATVGTTSSNAVDPVGAVADVAARFAAWVHVDAAYAGSACICPEFRHHLDGVERVDSISMSPHKWLMTCLDCTCLYVRDTHRLTGSLETNPEYLKNHASDSGEVTDLKDMQVGVGRRFRGLKLWMVMRTYGVAKLQEHIRSDVAMAKVFEDLVRGDDRFEVVVPRNFALVCFRIRAGAGAAAATEEDADEANRELMERLNKTGKAYVAHTVVGGRFVLRFAVGSSLQEEHHVRSAWELIKKTTTEMMN</sequence>
<proteinExistence type="evidence at protein level"/>
<keyword id="KW-0002">3D-structure</keyword>
<keyword id="KW-0210">Decarboxylase</keyword>
<keyword id="KW-0456">Lyase</keyword>
<keyword id="KW-0663">Pyridoxal phosphate</keyword>
<keyword id="KW-1185">Reference proteome</keyword>
<keyword id="KW-0724">Serotonin biosynthesis</keyword>
<evidence type="ECO:0000250" key="1">
    <source>
        <dbReference type="UniProtKB" id="P20711"/>
    </source>
</evidence>
<evidence type="ECO:0000269" key="2">
    <source>
    </source>
</evidence>
<evidence type="ECO:0000269" key="3">
    <source>
    </source>
</evidence>
<evidence type="ECO:0000269" key="4">
    <source>
    </source>
</evidence>
<evidence type="ECO:0000303" key="5">
    <source>
    </source>
</evidence>
<evidence type="ECO:0000305" key="6"/>
<evidence type="ECO:0000312" key="7">
    <source>
        <dbReference type="EMBL" id="BAD11581.1"/>
    </source>
</evidence>
<evidence type="ECO:0000312" key="8">
    <source>
        <dbReference type="EMBL" id="BAF22882.1"/>
    </source>
</evidence>
<evidence type="ECO:0000312" key="9">
    <source>
        <dbReference type="EMBL" id="EAZ41470.1"/>
    </source>
</evidence>
<evidence type="ECO:0007744" key="10">
    <source>
        <dbReference type="PDB" id="6KHN"/>
    </source>
</evidence>
<evidence type="ECO:0007744" key="11">
    <source>
        <dbReference type="PDB" id="6KHO"/>
    </source>
</evidence>
<evidence type="ECO:0007744" key="12">
    <source>
        <dbReference type="PDB" id="6KHP"/>
    </source>
</evidence>
<evidence type="ECO:0007829" key="13">
    <source>
        <dbReference type="PDB" id="6KHN"/>
    </source>
</evidence>
<evidence type="ECO:0007829" key="14">
    <source>
        <dbReference type="PDB" id="6KHO"/>
    </source>
</evidence>
<feature type="chain" id="PRO_0000444622" description="Tryptophan decarboxylase 1">
    <location>
        <begin position="1"/>
        <end position="514"/>
    </location>
</feature>
<feature type="active site" description="Proton donor" evidence="4">
    <location>
        <position position="359"/>
    </location>
</feature>
<feature type="binding site" evidence="4 10">
    <location>
        <position position="104"/>
    </location>
    <ligand>
        <name>serotonin</name>
        <dbReference type="ChEBI" id="CHEBI:350546"/>
    </ligand>
</feature>
<feature type="binding site" evidence="4 10 11 12">
    <location>
        <position position="175"/>
    </location>
    <ligand>
        <name>pyridoxal 5'-phosphate</name>
        <dbReference type="ChEBI" id="CHEBI:597326"/>
    </ligand>
</feature>
<feature type="binding site" evidence="4 10 11 12">
    <location>
        <position position="176"/>
    </location>
    <ligand>
        <name>pyridoxal 5'-phosphate</name>
        <dbReference type="ChEBI" id="CHEBI:597326"/>
    </ligand>
</feature>
<feature type="binding site" evidence="4 10">
    <location>
        <position position="214"/>
    </location>
    <ligand>
        <name>serotonin</name>
        <dbReference type="ChEBI" id="CHEBI:350546"/>
    </ligand>
</feature>
<feature type="binding site" evidence="1">
    <location>
        <position position="273"/>
    </location>
    <ligand>
        <name>pyridoxal 5'-phosphate</name>
        <dbReference type="ChEBI" id="CHEBI:597326"/>
    </ligand>
</feature>
<feature type="binding site" evidence="4 12">
    <location>
        <position position="380"/>
    </location>
    <ligand>
        <name>pyridoxal 5'-phosphate</name>
        <dbReference type="ChEBI" id="CHEBI:597326"/>
    </ligand>
</feature>
<feature type="binding site" evidence="4 11">
    <location>
        <position position="381"/>
    </location>
    <ligand>
        <name>pyridoxal 5'-phosphate</name>
        <dbReference type="ChEBI" id="CHEBI:597326"/>
    </ligand>
</feature>
<feature type="modified residue" description="N6-(pyridoxal phosphate)lysine" evidence="4 10 12">
    <location>
        <position position="330"/>
    </location>
</feature>
<feature type="mutagenesis site" description="Abolishes enzymatic activity." evidence="4">
    <original>W</original>
    <variation>A</variation>
    <location>
        <position position="95"/>
    </location>
</feature>
<feature type="mutagenesis site" description="Slightly increases enzymatic activity." evidence="4">
    <original>S</original>
    <variation>A</variation>
    <location>
        <position position="106"/>
    </location>
</feature>
<feature type="mutagenesis site" description="Reduces enzymatic activity 5-fold." evidence="4">
    <original>F</original>
    <variation>A</variation>
    <location>
        <position position="127"/>
    </location>
</feature>
<feature type="mutagenesis site" description="Reduces enzymatic activity 50-fold." evidence="4">
    <original>H</original>
    <variation>A</variation>
    <variation>F</variation>
    <variation>Q</variation>
    <location>
        <position position="214"/>
    </location>
</feature>
<feature type="mutagenesis site" description="Reduces enzymatic activity 20-fold." evidence="4">
    <original>H</original>
    <variation>Q</variation>
    <location>
        <position position="214"/>
    </location>
</feature>
<feature type="mutagenesis site" description="Abolishes enzymatic activity." evidence="4">
    <original>H</original>
    <variation>Y</variation>
    <location>
        <position position="214"/>
    </location>
</feature>
<feature type="mutagenesis site" description="Abolishes enzymatic activity." evidence="4">
    <original>D</original>
    <variation>A</variation>
    <location>
        <position position="298"/>
    </location>
</feature>
<feature type="mutagenesis site" description="Reduces enzymatic activity 7-fold." evidence="4">
    <original>A</original>
    <variation>G</variation>
    <location>
        <position position="300"/>
    </location>
</feature>
<feature type="mutagenesis site" description="Abolishes enzymatic activity." evidence="4">
    <original>K</original>
    <variation>A</variation>
    <location>
        <position position="330"/>
    </location>
</feature>
<feature type="mutagenesis site" description="Reduces enzymatic activity 40-fold." evidence="4">
    <original>L</original>
    <variation>A</variation>
    <location>
        <position position="336"/>
    </location>
</feature>
<feature type="mutagenesis site" description="Slightly decreases enzymatic activity." evidence="4">
    <original>E</original>
    <variation>A</variation>
    <location>
        <position position="358"/>
    </location>
</feature>
<feature type="mutagenesis site" description="Abolishes enzymatic activity." evidence="4">
    <original>Y</original>
    <variation>A</variation>
    <variation>F</variation>
    <variation>H</variation>
    <location>
        <position position="359"/>
    </location>
</feature>
<feature type="mutagenesis site" description="Reduces enzymatic activity 20-fold." evidence="4">
    <original>Y</original>
    <variation>Q</variation>
    <location>
        <position position="359"/>
    </location>
</feature>
<feature type="mutagenesis site" description="Abolishes enzymatic activity." evidence="4">
    <original>L</original>
    <variation>A</variation>
    <location>
        <position position="360"/>
    </location>
</feature>
<feature type="mutagenesis site" description="No effect on enzymatic activity." evidence="4">
    <original>K</original>
    <variation>A</variation>
    <location>
        <position position="361"/>
    </location>
</feature>
<feature type="mutagenesis site" description="Reduces enzymatic activity 5-fold." evidence="4">
    <original>V</original>
    <variation>A</variation>
    <location>
        <position position="380"/>
    </location>
</feature>
<feature type="helix" evidence="14">
    <location>
        <begin position="27"/>
        <end position="47"/>
    </location>
</feature>
<feature type="helix" evidence="14">
    <location>
        <begin position="48"/>
        <end position="50"/>
    </location>
</feature>
<feature type="helix" evidence="14">
    <location>
        <begin position="61"/>
        <end position="65"/>
    </location>
</feature>
<feature type="helix" evidence="14">
    <location>
        <begin position="77"/>
        <end position="87"/>
    </location>
</feature>
<feature type="helix" evidence="14">
    <location>
        <begin position="89"/>
        <end position="91"/>
    </location>
</feature>
<feature type="strand" evidence="14">
    <location>
        <begin position="102"/>
        <end position="104"/>
    </location>
</feature>
<feature type="helix" evidence="14">
    <location>
        <begin position="110"/>
        <end position="122"/>
    </location>
</feature>
<feature type="strand" evidence="14">
    <location>
        <begin position="127"/>
        <end position="129"/>
    </location>
</feature>
<feature type="helix" evidence="14">
    <location>
        <begin position="133"/>
        <end position="149"/>
    </location>
</feature>
<feature type="helix" evidence="14">
    <location>
        <begin position="154"/>
        <end position="156"/>
    </location>
</feature>
<feature type="strand" evidence="14">
    <location>
        <begin position="168"/>
        <end position="173"/>
    </location>
</feature>
<feature type="helix" evidence="14">
    <location>
        <begin position="175"/>
        <end position="194"/>
    </location>
</feature>
<feature type="helix" evidence="14">
    <location>
        <begin position="200"/>
        <end position="204"/>
    </location>
</feature>
<feature type="strand" evidence="14">
    <location>
        <begin position="205"/>
        <end position="210"/>
    </location>
</feature>
<feature type="helix" evidence="14">
    <location>
        <begin position="215"/>
        <end position="223"/>
    </location>
</feature>
<feature type="helix" evidence="14">
    <location>
        <begin position="228"/>
        <end position="230"/>
    </location>
</feature>
<feature type="strand" evidence="14">
    <location>
        <begin position="231"/>
        <end position="234"/>
    </location>
</feature>
<feature type="helix" evidence="14">
    <location>
        <begin position="238"/>
        <end position="240"/>
    </location>
</feature>
<feature type="helix" evidence="14">
    <location>
        <begin position="246"/>
        <end position="258"/>
    </location>
</feature>
<feature type="strand" evidence="14">
    <location>
        <begin position="262"/>
        <end position="271"/>
    </location>
</feature>
<feature type="turn" evidence="14">
    <location>
        <begin position="273"/>
        <end position="275"/>
    </location>
</feature>
<feature type="helix" evidence="14">
    <location>
        <begin position="281"/>
        <end position="289"/>
    </location>
</feature>
<feature type="turn" evidence="14">
    <location>
        <begin position="290"/>
        <end position="292"/>
    </location>
</feature>
<feature type="strand" evidence="14">
    <location>
        <begin position="294"/>
        <end position="298"/>
    </location>
</feature>
<feature type="helix" evidence="14">
    <location>
        <begin position="302"/>
        <end position="307"/>
    </location>
</feature>
<feature type="turn" evidence="14">
    <location>
        <begin position="309"/>
        <end position="311"/>
    </location>
</feature>
<feature type="helix" evidence="14">
    <location>
        <begin position="312"/>
        <end position="315"/>
    </location>
</feature>
<feature type="helix" evidence="14">
    <location>
        <begin position="318"/>
        <end position="320"/>
    </location>
</feature>
<feature type="strand" evidence="14">
    <location>
        <begin position="321"/>
        <end position="326"/>
    </location>
</feature>
<feature type="helix" evidence="14">
    <location>
        <begin position="328"/>
        <end position="331"/>
    </location>
</feature>
<feature type="strand" evidence="14">
    <location>
        <begin position="339"/>
        <end position="344"/>
    </location>
</feature>
<feature type="helix" evidence="14">
    <location>
        <begin position="346"/>
        <end position="353"/>
    </location>
</feature>
<feature type="helix" evidence="14">
    <location>
        <begin position="358"/>
        <end position="360"/>
    </location>
</feature>
<feature type="helix" evidence="14">
    <location>
        <begin position="363"/>
        <end position="366"/>
    </location>
</feature>
<feature type="helix" evidence="14">
    <location>
        <begin position="373"/>
        <end position="376"/>
    </location>
</feature>
<feature type="strand" evidence="14">
    <location>
        <begin position="377"/>
        <end position="380"/>
    </location>
</feature>
<feature type="helix" evidence="14">
    <location>
        <begin position="386"/>
        <end position="420"/>
    </location>
</feature>
<feature type="strand" evidence="14">
    <location>
        <begin position="425"/>
        <end position="427"/>
    </location>
</feature>
<feature type="strand" evidence="14">
    <location>
        <begin position="433"/>
        <end position="440"/>
    </location>
</feature>
<feature type="strand" evidence="13">
    <location>
        <begin position="444"/>
        <end position="446"/>
    </location>
</feature>
<feature type="helix" evidence="14">
    <location>
        <begin position="451"/>
        <end position="468"/>
    </location>
</feature>
<feature type="strand" evidence="14">
    <location>
        <begin position="474"/>
        <end position="478"/>
    </location>
</feature>
<feature type="strand" evidence="14">
    <location>
        <begin position="481"/>
        <end position="487"/>
    </location>
</feature>
<feature type="helix" evidence="14">
    <location>
        <begin position="495"/>
        <end position="513"/>
    </location>
</feature>
<protein>
    <recommendedName>
        <fullName evidence="5">Tryptophan decarboxylase 1</fullName>
        <ecNumber evidence="2 4">4.1.1.28</ecNumber>
    </recommendedName>
    <alternativeName>
        <fullName evidence="6">5-hydroxytryptophan decarboxylase TDC1</fullName>
    </alternativeName>
</protein>
<reference key="1">
    <citation type="journal article" date="2005" name="Nature">
        <title>The map-based sequence of the rice genome.</title>
        <authorList>
            <consortium name="International rice genome sequencing project (IRGSP)"/>
        </authorList>
    </citation>
    <scope>NUCLEOTIDE SEQUENCE [LARGE SCALE GENOMIC DNA]</scope>
    <source>
        <strain>cv. Nipponbare</strain>
    </source>
</reference>
<reference key="2">
    <citation type="journal article" date="2008" name="Nucleic Acids Res.">
        <title>The rice annotation project database (RAP-DB): 2008 update.</title>
        <authorList>
            <consortium name="The rice annotation project (RAP)"/>
        </authorList>
    </citation>
    <scope>GENOME REANNOTATION</scope>
    <source>
        <strain>cv. Nipponbare</strain>
    </source>
</reference>
<reference key="3">
    <citation type="journal article" date="2013" name="Rice">
        <title>Improvement of the Oryza sativa Nipponbare reference genome using next generation sequence and optical map data.</title>
        <authorList>
            <person name="Kawahara Y."/>
            <person name="de la Bastide M."/>
            <person name="Hamilton J.P."/>
            <person name="Kanamori H."/>
            <person name="McCombie W.R."/>
            <person name="Ouyang S."/>
            <person name="Schwartz D.C."/>
            <person name="Tanaka T."/>
            <person name="Wu J."/>
            <person name="Zhou S."/>
            <person name="Childs K.L."/>
            <person name="Davidson R.M."/>
            <person name="Lin H."/>
            <person name="Quesada-Ocampo L."/>
            <person name="Vaillancourt B."/>
            <person name="Sakai H."/>
            <person name="Lee S.S."/>
            <person name="Kim J."/>
            <person name="Numa H."/>
            <person name="Itoh T."/>
            <person name="Buell C.R."/>
            <person name="Matsumoto T."/>
        </authorList>
    </citation>
    <scope>GENOME REANNOTATION</scope>
    <source>
        <strain>cv. Nipponbare</strain>
    </source>
</reference>
<reference key="4">
    <citation type="journal article" date="2005" name="PLoS Biol.">
        <title>The genomes of Oryza sativa: a history of duplications.</title>
        <authorList>
            <person name="Yu J."/>
            <person name="Wang J."/>
            <person name="Lin W."/>
            <person name="Li S."/>
            <person name="Li H."/>
            <person name="Zhou J."/>
            <person name="Ni P."/>
            <person name="Dong W."/>
            <person name="Hu S."/>
            <person name="Zeng C."/>
            <person name="Zhang J."/>
            <person name="Zhang Y."/>
            <person name="Li R."/>
            <person name="Xu Z."/>
            <person name="Li S."/>
            <person name="Li X."/>
            <person name="Zheng H."/>
            <person name="Cong L."/>
            <person name="Lin L."/>
            <person name="Yin J."/>
            <person name="Geng J."/>
            <person name="Li G."/>
            <person name="Shi J."/>
            <person name="Liu J."/>
            <person name="Lv H."/>
            <person name="Li J."/>
            <person name="Wang J."/>
            <person name="Deng Y."/>
            <person name="Ran L."/>
            <person name="Shi X."/>
            <person name="Wang X."/>
            <person name="Wu Q."/>
            <person name="Li C."/>
            <person name="Ren X."/>
            <person name="Wang J."/>
            <person name="Wang X."/>
            <person name="Li D."/>
            <person name="Liu D."/>
            <person name="Zhang X."/>
            <person name="Ji Z."/>
            <person name="Zhao W."/>
            <person name="Sun Y."/>
            <person name="Zhang Z."/>
            <person name="Bao J."/>
            <person name="Han Y."/>
            <person name="Dong L."/>
            <person name="Ji J."/>
            <person name="Chen P."/>
            <person name="Wu S."/>
            <person name="Liu J."/>
            <person name="Xiao Y."/>
            <person name="Bu D."/>
            <person name="Tan J."/>
            <person name="Yang L."/>
            <person name="Ye C."/>
            <person name="Zhang J."/>
            <person name="Xu J."/>
            <person name="Zhou Y."/>
            <person name="Yu Y."/>
            <person name="Zhang B."/>
            <person name="Zhuang S."/>
            <person name="Wei H."/>
            <person name="Liu B."/>
            <person name="Lei M."/>
            <person name="Yu H."/>
            <person name="Li Y."/>
            <person name="Xu H."/>
            <person name="Wei S."/>
            <person name="He X."/>
            <person name="Fang L."/>
            <person name="Zhang Z."/>
            <person name="Zhang Y."/>
            <person name="Huang X."/>
            <person name="Su Z."/>
            <person name="Tong W."/>
            <person name="Li J."/>
            <person name="Tong Z."/>
            <person name="Li S."/>
            <person name="Ye J."/>
            <person name="Wang L."/>
            <person name="Fang L."/>
            <person name="Lei T."/>
            <person name="Chen C.-S."/>
            <person name="Chen H.-C."/>
            <person name="Xu Z."/>
            <person name="Li H."/>
            <person name="Huang H."/>
            <person name="Zhang F."/>
            <person name="Xu H."/>
            <person name="Li N."/>
            <person name="Zhao C."/>
            <person name="Li S."/>
            <person name="Dong L."/>
            <person name="Huang Y."/>
            <person name="Li L."/>
            <person name="Xi Y."/>
            <person name="Qi Q."/>
            <person name="Li W."/>
            <person name="Zhang B."/>
            <person name="Hu W."/>
            <person name="Zhang Y."/>
            <person name="Tian X."/>
            <person name="Jiao Y."/>
            <person name="Liang X."/>
            <person name="Jin J."/>
            <person name="Gao L."/>
            <person name="Zheng W."/>
            <person name="Hao B."/>
            <person name="Liu S.-M."/>
            <person name="Wang W."/>
            <person name="Yuan L."/>
            <person name="Cao M."/>
            <person name="McDermott J."/>
            <person name="Samudrala R."/>
            <person name="Wang J."/>
            <person name="Wong G.K.-S."/>
            <person name="Yang H."/>
        </authorList>
    </citation>
    <scope>NUCLEOTIDE SEQUENCE [LARGE SCALE GENOMIC DNA]</scope>
    <source>
        <strain>cv. Nipponbare</strain>
    </source>
</reference>
<reference key="5">
    <citation type="journal article" date="2003" name="Science">
        <title>Collection, mapping, and annotation of over 28,000 cDNA clones from japonica rice.</title>
        <authorList>
            <consortium name="The rice full-length cDNA consortium"/>
        </authorList>
    </citation>
    <scope>NUCLEOTIDE SEQUENCE [LARGE SCALE MRNA]</scope>
    <source>
        <strain>cv. Nipponbare</strain>
    </source>
</reference>
<reference key="6">
    <citation type="journal article" date="2007" name="Planta">
        <title>Characterization of rice tryptophan decarboxylases and their direct involvement in serotonin biosynthesis in transgenic rice.</title>
        <authorList>
            <person name="Kang S."/>
            <person name="Kang K."/>
            <person name="Lee K."/>
            <person name="Back K."/>
        </authorList>
    </citation>
    <scope>FUNCTION</scope>
    <scope>CATALYTIC ACTIVITY</scope>
    <scope>BIOPHYSICOCHEMICAL PROPERTIES</scope>
</reference>
<reference key="7">
    <citation type="journal article" date="2009" name="Plant Physiol.">
        <title>Senescence-induced serotonin biosynthesis and its role in delaying senescence in rice leaves.</title>
        <authorList>
            <person name="Kang K."/>
            <person name="Kim Y.S."/>
            <person name="Park S."/>
            <person name="Back K."/>
        </authorList>
    </citation>
    <scope>FUNCTION</scope>
    <scope>INDUCTION</scope>
</reference>
<reference key="8">
    <citation type="journal article" date="2020" name="J. Adv. Res.">
        <title>Crystal structure of Oryza sativa TDC reveals the substrate specificity for TDC-mediated melatonin biosynthesis.</title>
        <authorList>
            <person name="Zhou Y."/>
            <person name="Liao L."/>
            <person name="Liu X."/>
            <person name="Liu B."/>
            <person name="Chen X."/>
            <person name="Guo Y."/>
            <person name="Huang C."/>
            <person name="Zhao Y."/>
            <person name="Zeng Z."/>
        </authorList>
    </citation>
    <scope>X-RAY CRYSTALLOGRAPHY (1.97 ANGSTROMS) IN COMPLEX WITH PYRIDOXAL PHOSPHATE; TRYPTAMINE AND SEROTONIN</scope>
    <scope>FUNCTION</scope>
    <scope>CATALYTIC ACTIVITY</scope>
    <scope>ACTIVE SITE</scope>
    <scope>SUBUNIT</scope>
    <scope>N6-(PYRIDOXAL PHOSPHATE)LYSINE</scope>
    <scope>MUTAGENESIS OF TRP-95; SER-106; PHE-127; HIS-214; ASP-298; ALA-300; LYS-330; LEU-336; GLU-358; TYR-359; LEU-360; LYS-361 AND VAL-380</scope>
</reference>